<accession>A6LG55</accession>
<feature type="chain" id="PRO_1000000733" description="Endoribonuclease YbeY">
    <location>
        <begin position="1"/>
        <end position="142"/>
    </location>
</feature>
<feature type="binding site" evidence="1">
    <location>
        <position position="107"/>
    </location>
    <ligand>
        <name>Zn(2+)</name>
        <dbReference type="ChEBI" id="CHEBI:29105"/>
        <note>catalytic</note>
    </ligand>
</feature>
<feature type="binding site" evidence="1">
    <location>
        <position position="111"/>
    </location>
    <ligand>
        <name>Zn(2+)</name>
        <dbReference type="ChEBI" id="CHEBI:29105"/>
        <note>catalytic</note>
    </ligand>
</feature>
<feature type="binding site" evidence="1">
    <location>
        <position position="117"/>
    </location>
    <ligand>
        <name>Zn(2+)</name>
        <dbReference type="ChEBI" id="CHEBI:29105"/>
        <note>catalytic</note>
    </ligand>
</feature>
<dbReference type="EC" id="3.1.-.-" evidence="1"/>
<dbReference type="EMBL" id="CP000140">
    <property type="protein sequence ID" value="ABR44669.1"/>
    <property type="molecule type" value="Genomic_DNA"/>
</dbReference>
<dbReference type="RefSeq" id="WP_005860456.1">
    <property type="nucleotide sequence ID" value="NZ_LR215978.1"/>
</dbReference>
<dbReference type="SMR" id="A6LG55"/>
<dbReference type="STRING" id="435591.BDI_2961"/>
<dbReference type="PaxDb" id="435591-BDI_2961"/>
<dbReference type="KEGG" id="pdi:BDI_2961"/>
<dbReference type="eggNOG" id="COG0319">
    <property type="taxonomic scope" value="Bacteria"/>
</dbReference>
<dbReference type="HOGENOM" id="CLU_106710_3_3_10"/>
<dbReference type="BioCyc" id="PDIS435591:G1G5A-3038-MONOMER"/>
<dbReference type="Proteomes" id="UP000000566">
    <property type="component" value="Chromosome"/>
</dbReference>
<dbReference type="GO" id="GO:0005737">
    <property type="term" value="C:cytoplasm"/>
    <property type="evidence" value="ECO:0007669"/>
    <property type="project" value="UniProtKB-SubCell"/>
</dbReference>
<dbReference type="GO" id="GO:0004222">
    <property type="term" value="F:metalloendopeptidase activity"/>
    <property type="evidence" value="ECO:0007669"/>
    <property type="project" value="InterPro"/>
</dbReference>
<dbReference type="GO" id="GO:0004521">
    <property type="term" value="F:RNA endonuclease activity"/>
    <property type="evidence" value="ECO:0007669"/>
    <property type="project" value="UniProtKB-UniRule"/>
</dbReference>
<dbReference type="GO" id="GO:0008270">
    <property type="term" value="F:zinc ion binding"/>
    <property type="evidence" value="ECO:0007669"/>
    <property type="project" value="UniProtKB-UniRule"/>
</dbReference>
<dbReference type="GO" id="GO:0006364">
    <property type="term" value="P:rRNA processing"/>
    <property type="evidence" value="ECO:0007669"/>
    <property type="project" value="UniProtKB-UniRule"/>
</dbReference>
<dbReference type="Gene3D" id="3.40.390.30">
    <property type="entry name" value="Metalloproteases ('zincins'), catalytic domain"/>
    <property type="match status" value="1"/>
</dbReference>
<dbReference type="HAMAP" id="MF_00009">
    <property type="entry name" value="Endoribonucl_YbeY"/>
    <property type="match status" value="1"/>
</dbReference>
<dbReference type="InterPro" id="IPR023091">
    <property type="entry name" value="MetalPrtase_cat_dom_sf_prd"/>
</dbReference>
<dbReference type="InterPro" id="IPR002036">
    <property type="entry name" value="YbeY"/>
</dbReference>
<dbReference type="NCBIfam" id="TIGR00043">
    <property type="entry name" value="rRNA maturation RNase YbeY"/>
    <property type="match status" value="1"/>
</dbReference>
<dbReference type="PANTHER" id="PTHR46986">
    <property type="entry name" value="ENDORIBONUCLEASE YBEY, CHLOROPLASTIC"/>
    <property type="match status" value="1"/>
</dbReference>
<dbReference type="PANTHER" id="PTHR46986:SF1">
    <property type="entry name" value="ENDORIBONUCLEASE YBEY, CHLOROPLASTIC"/>
    <property type="match status" value="1"/>
</dbReference>
<dbReference type="Pfam" id="PF02130">
    <property type="entry name" value="YbeY"/>
    <property type="match status" value="1"/>
</dbReference>
<dbReference type="SUPFAM" id="SSF55486">
    <property type="entry name" value="Metalloproteases ('zincins'), catalytic domain"/>
    <property type="match status" value="1"/>
</dbReference>
<gene>
    <name evidence="1" type="primary">ybeY</name>
    <name type="ordered locus">BDI_2961</name>
</gene>
<name>YBEY_PARD8</name>
<evidence type="ECO:0000255" key="1">
    <source>
        <dbReference type="HAMAP-Rule" id="MF_00009"/>
    </source>
</evidence>
<proteinExistence type="inferred from homology"/>
<sequence>MAIAYYAEDIQLPAIKKKAVSGWIKAVAETYGKKTGDISYIFCSDEKILEVNRQYLQHDYYTDIITFDYTEGNKISGDLFISLDTVRTNAETFHTDYNEELHRTIIHGILHLCGINDKGPGEREIMEENENRALAILPEECR</sequence>
<organism>
    <name type="scientific">Parabacteroides distasonis (strain ATCC 8503 / DSM 20701 / CIP 104284 / JCM 5825 / NCTC 11152)</name>
    <dbReference type="NCBI Taxonomy" id="435591"/>
    <lineage>
        <taxon>Bacteria</taxon>
        <taxon>Pseudomonadati</taxon>
        <taxon>Bacteroidota</taxon>
        <taxon>Bacteroidia</taxon>
        <taxon>Bacteroidales</taxon>
        <taxon>Tannerellaceae</taxon>
        <taxon>Parabacteroides</taxon>
    </lineage>
</organism>
<comment type="function">
    <text evidence="1">Single strand-specific metallo-endoribonuclease involved in late-stage 70S ribosome quality control and in maturation of the 3' terminus of the 16S rRNA.</text>
</comment>
<comment type="cofactor">
    <cofactor evidence="1">
        <name>Zn(2+)</name>
        <dbReference type="ChEBI" id="CHEBI:29105"/>
    </cofactor>
    <text evidence="1">Binds 1 zinc ion.</text>
</comment>
<comment type="subcellular location">
    <subcellularLocation>
        <location evidence="1">Cytoplasm</location>
    </subcellularLocation>
</comment>
<comment type="similarity">
    <text evidence="1">Belongs to the endoribonuclease YbeY family.</text>
</comment>
<keyword id="KW-0963">Cytoplasm</keyword>
<keyword id="KW-0255">Endonuclease</keyword>
<keyword id="KW-0378">Hydrolase</keyword>
<keyword id="KW-0479">Metal-binding</keyword>
<keyword id="KW-0540">Nuclease</keyword>
<keyword id="KW-1185">Reference proteome</keyword>
<keyword id="KW-0690">Ribosome biogenesis</keyword>
<keyword id="KW-0698">rRNA processing</keyword>
<keyword id="KW-0862">Zinc</keyword>
<reference key="1">
    <citation type="journal article" date="2007" name="PLoS Biol.">
        <title>Evolution of symbiotic bacteria in the distal human intestine.</title>
        <authorList>
            <person name="Xu J."/>
            <person name="Mahowald M.A."/>
            <person name="Ley R.E."/>
            <person name="Lozupone C.A."/>
            <person name="Hamady M."/>
            <person name="Martens E.C."/>
            <person name="Henrissat B."/>
            <person name="Coutinho P.M."/>
            <person name="Minx P."/>
            <person name="Latreille P."/>
            <person name="Cordum H."/>
            <person name="Van Brunt A."/>
            <person name="Kim K."/>
            <person name="Fulton R.S."/>
            <person name="Fulton L.A."/>
            <person name="Clifton S.W."/>
            <person name="Wilson R.K."/>
            <person name="Knight R.D."/>
            <person name="Gordon J.I."/>
        </authorList>
    </citation>
    <scope>NUCLEOTIDE SEQUENCE [LARGE SCALE GENOMIC DNA]</scope>
    <source>
        <strain>ATCC 8503 / DSM 20701 / CIP 104284 / JCM 5825 / NCTC 11152</strain>
    </source>
</reference>
<protein>
    <recommendedName>
        <fullName evidence="1">Endoribonuclease YbeY</fullName>
        <ecNumber evidence="1">3.1.-.-</ecNumber>
    </recommendedName>
</protein>